<evidence type="ECO:0000255" key="1">
    <source>
        <dbReference type="PROSITE-ProRule" id="PRU00303"/>
    </source>
</evidence>
<evidence type="ECO:0000256" key="2">
    <source>
        <dbReference type="SAM" id="MobiDB-lite"/>
    </source>
</evidence>
<evidence type="ECO:0000305" key="3"/>
<protein>
    <recommendedName>
        <fullName>Lipoprotein p33</fullName>
    </recommendedName>
</protein>
<name>P33_MALPE</name>
<organism>
    <name type="scientific">Malacoplasma penetrans</name>
    <name type="common">Mycoplasma penetrans</name>
    <dbReference type="NCBI Taxonomy" id="28227"/>
    <lineage>
        <taxon>Bacteria</taxon>
        <taxon>Bacillati</taxon>
        <taxon>Mycoplasmatota</taxon>
        <taxon>Mycoplasmoidales</taxon>
        <taxon>Mycoplasmoidaceae</taxon>
        <taxon>Malacoplasma</taxon>
    </lineage>
</organism>
<proteinExistence type="inferred from homology"/>
<comment type="subcellular location">
    <subcellularLocation>
        <location evidence="1">Cell membrane</location>
        <topology evidence="1">Lipid-anchor</topology>
    </subcellularLocation>
</comment>
<comment type="similarity">
    <text evidence="3">Belongs to the p35 lipoprotein family.</text>
</comment>
<comment type="sequence caution" evidence="3">
    <conflict type="frameshift">
        <sequence resource="EMBL-CDS" id="AAC16393"/>
    </conflict>
</comment>
<feature type="signal peptide" evidence="3">
    <location>
        <begin position="1"/>
        <end position="30"/>
    </location>
</feature>
<feature type="chain" id="PRO_0000412635" description="Lipoprotein p33">
    <location>
        <begin position="31"/>
        <end position="376"/>
    </location>
</feature>
<feature type="region of interest" description="Disordered" evidence="2">
    <location>
        <begin position="35"/>
        <end position="59"/>
    </location>
</feature>
<feature type="compositionally biased region" description="Gly residues" evidence="2">
    <location>
        <begin position="38"/>
        <end position="51"/>
    </location>
</feature>
<feature type="lipid moiety-binding region" description="N-palmitoyl cysteine" evidence="3">
    <location>
        <position position="31"/>
    </location>
</feature>
<feature type="lipid moiety-binding region" description="S-diacylglycerol cysteine" evidence="3">
    <location>
        <position position="31"/>
    </location>
</feature>
<dbReference type="EMBL" id="L38250">
    <property type="protein sequence ID" value="AAC16393.1"/>
    <property type="status" value="ALT_FRAME"/>
    <property type="molecule type" value="Genomic_DNA"/>
</dbReference>
<dbReference type="GO" id="GO:0005886">
    <property type="term" value="C:plasma membrane"/>
    <property type="evidence" value="ECO:0007669"/>
    <property type="project" value="UniProtKB-SubCell"/>
</dbReference>
<dbReference type="InterPro" id="IPR011653">
    <property type="entry name" value="Lipoprotein_p35"/>
</dbReference>
<dbReference type="Pfam" id="PF07668">
    <property type="entry name" value="MpPF1"/>
    <property type="match status" value="1"/>
</dbReference>
<dbReference type="PROSITE" id="PS51257">
    <property type="entry name" value="PROKAR_LIPOPROTEIN"/>
    <property type="match status" value="1"/>
</dbReference>
<sequence length="376" mass="40102">MKIKKIKLLKALALTGAFGIVATVPVIVYSCSSTDNNGGTGDNNTGGGGSGTDQQQGTTYTPAIKSDVTLSGALSKIYDTTNTGDSRKNTNTLIAEDIKANPENYFTNGEDLKKVEGWSVTVDGSFDSNSVWTGDAYSKWSAVADTHKGVYKSTSKQLNINSLKDLKSQLDTSAKIKAICDESNLVFSTADADSYKIQNELGFTGGDLLHINVTATQAGKTLNMDLGIPVSDLNLKITDLKVSVTASNNSTGNNVAAVSDLTTNFTYNIGIKEEVTAPTEKPNLAKTDKGEVMKVLKALGYTQTGDETKLDNDKVSNSLGLYNCEFTAVSATPVEGSEDKFTIKLKAKPLTDYVWEDGTNTEKEISFEATFTMTGN</sequence>
<keyword id="KW-1003">Cell membrane</keyword>
<keyword id="KW-0449">Lipoprotein</keyword>
<keyword id="KW-0472">Membrane</keyword>
<keyword id="KW-0564">Palmitate</keyword>
<keyword id="KW-0732">Signal</keyword>
<reference key="1">
    <citation type="journal article" date="1995" name="FEMS Microbiol. Lett.">
        <title>Characterization of a major Mycoplasma penetrans lipoprotein and of its gene.</title>
        <authorList>
            <person name="Ferris S."/>
            <person name="Watson H.L."/>
            <person name="Neyrolles O."/>
            <person name="Montagnier L."/>
            <person name="Blanchard A."/>
        </authorList>
    </citation>
    <scope>NUCLEOTIDE SEQUENCE [GENOMIC DNA]</scope>
    <source>
        <strain>ATCC 55252 / DSM 22633 / GTU-54-6A1</strain>
    </source>
</reference>
<accession>P0DI99</accession>
<accession>Q50368</accession>